<organism>
    <name type="scientific">Escherichia coli O111:H- (strain 11128 / EHEC)</name>
    <dbReference type="NCBI Taxonomy" id="585396"/>
    <lineage>
        <taxon>Bacteria</taxon>
        <taxon>Pseudomonadati</taxon>
        <taxon>Pseudomonadota</taxon>
        <taxon>Gammaproteobacteria</taxon>
        <taxon>Enterobacterales</taxon>
        <taxon>Enterobacteriaceae</taxon>
        <taxon>Escherichia</taxon>
    </lineage>
</organism>
<protein>
    <recommendedName>
        <fullName evidence="1">Putative carbamate hydrolase RutD</fullName>
        <ecNumber evidence="1">3.5.1.-</ecNumber>
    </recommendedName>
    <alternativeName>
        <fullName evidence="1">Aminohydrolase</fullName>
    </alternativeName>
</protein>
<feature type="chain" id="PRO_0000402948" description="Putative carbamate hydrolase RutD">
    <location>
        <begin position="1"/>
        <end position="266"/>
    </location>
</feature>
<reference key="1">
    <citation type="journal article" date="2009" name="Proc. Natl. Acad. Sci. U.S.A.">
        <title>Comparative genomics reveal the mechanism of the parallel evolution of O157 and non-O157 enterohemorrhagic Escherichia coli.</title>
        <authorList>
            <person name="Ogura Y."/>
            <person name="Ooka T."/>
            <person name="Iguchi A."/>
            <person name="Toh H."/>
            <person name="Asadulghani M."/>
            <person name="Oshima K."/>
            <person name="Kodama T."/>
            <person name="Abe H."/>
            <person name="Nakayama K."/>
            <person name="Kurokawa K."/>
            <person name="Tobe T."/>
            <person name="Hattori M."/>
            <person name="Hayashi T."/>
        </authorList>
    </citation>
    <scope>NUCLEOTIDE SEQUENCE [LARGE SCALE GENOMIC DNA]</scope>
    <source>
        <strain>11128 / EHEC</strain>
    </source>
</reference>
<proteinExistence type="inferred from homology"/>
<evidence type="ECO:0000255" key="1">
    <source>
        <dbReference type="HAMAP-Rule" id="MF_00832"/>
    </source>
</evidence>
<sequence length="266" mass="28884">MKLSLSPPPYADAPVVVLISGLGGSGSYWLPQLAVLEQEYQVVCYDQRGTGNNPDTLAEDYSIAQMAAELHQALVAAGIEHYAVVGHALGALVGMQLALDYPASVTVLISVNGWLRINAHTRRCFQVRERLLYSGGAQAWVEAQPLFLYPADWMAARAPRLEAEDALALAHFQGKNNLLRRLNALKRADFSHHADRIRCPVQIICASDDLLVPSACSSELHAALPDSQKMVMPYGGHACNVTDPETFNALLLNGLASLLHHREAAL</sequence>
<keyword id="KW-0378">Hydrolase</keyword>
<gene>
    <name evidence="1" type="primary">rutD</name>
    <name type="synonym">rarA</name>
    <name type="ordered locus">ECO111_1198</name>
</gene>
<dbReference type="EC" id="3.5.1.-" evidence="1"/>
<dbReference type="EMBL" id="AP010960">
    <property type="protein sequence ID" value="BAI35145.1"/>
    <property type="molecule type" value="Genomic_DNA"/>
</dbReference>
<dbReference type="RefSeq" id="WP_001345413.1">
    <property type="nucleotide sequence ID" value="NC_013364.1"/>
</dbReference>
<dbReference type="SMR" id="C8UMM5"/>
<dbReference type="ESTHER" id="ecoli-rutD">
    <property type="family name" value="RutD"/>
</dbReference>
<dbReference type="KEGG" id="eoi:ECO111_1198"/>
<dbReference type="HOGENOM" id="CLU_020336_50_1_6"/>
<dbReference type="GO" id="GO:0016811">
    <property type="term" value="F:hydrolase activity, acting on carbon-nitrogen (but not peptide) bonds, in linear amides"/>
    <property type="evidence" value="ECO:0007669"/>
    <property type="project" value="InterPro"/>
</dbReference>
<dbReference type="GO" id="GO:0019740">
    <property type="term" value="P:nitrogen utilization"/>
    <property type="evidence" value="ECO:0007669"/>
    <property type="project" value="UniProtKB-UniRule"/>
</dbReference>
<dbReference type="GO" id="GO:0006212">
    <property type="term" value="P:uracil catabolic process"/>
    <property type="evidence" value="ECO:0007669"/>
    <property type="project" value="UniProtKB-UniRule"/>
</dbReference>
<dbReference type="FunFam" id="3.40.50.1820:FF:000052">
    <property type="entry name" value="Putative aminoacrylate hydrolase RutD"/>
    <property type="match status" value="1"/>
</dbReference>
<dbReference type="Gene3D" id="3.40.50.1820">
    <property type="entry name" value="alpha/beta hydrolase"/>
    <property type="match status" value="1"/>
</dbReference>
<dbReference type="HAMAP" id="MF_00832">
    <property type="entry name" value="RutD"/>
    <property type="match status" value="1"/>
</dbReference>
<dbReference type="InterPro" id="IPR000073">
    <property type="entry name" value="AB_hydrolase_1"/>
</dbReference>
<dbReference type="InterPro" id="IPR029058">
    <property type="entry name" value="AB_hydrolase_fold"/>
</dbReference>
<dbReference type="InterPro" id="IPR050266">
    <property type="entry name" value="AB_hydrolase_sf"/>
</dbReference>
<dbReference type="InterPro" id="IPR019913">
    <property type="entry name" value="Pyrimidine_utilisation_RutD"/>
</dbReference>
<dbReference type="NCBIfam" id="TIGR03611">
    <property type="entry name" value="RutD"/>
    <property type="match status" value="1"/>
</dbReference>
<dbReference type="PANTHER" id="PTHR43798">
    <property type="entry name" value="MONOACYLGLYCEROL LIPASE"/>
    <property type="match status" value="1"/>
</dbReference>
<dbReference type="Pfam" id="PF00561">
    <property type="entry name" value="Abhydrolase_1"/>
    <property type="match status" value="1"/>
</dbReference>
<dbReference type="SUPFAM" id="SSF53474">
    <property type="entry name" value="alpha/beta-Hydrolases"/>
    <property type="match status" value="1"/>
</dbReference>
<accession>C8UMM5</accession>
<name>RUTD_ECO1A</name>
<comment type="function">
    <text evidence="1">Involved in pyrimidine catabolism. May facilitate the hydrolysis of carbamate, a reaction that can also occur spontaneously.</text>
</comment>
<comment type="catalytic activity">
    <reaction evidence="1">
        <text>carbamate + 2 H(+) = NH4(+) + CO2</text>
        <dbReference type="Rhea" id="RHEA:15649"/>
        <dbReference type="ChEBI" id="CHEBI:13941"/>
        <dbReference type="ChEBI" id="CHEBI:15378"/>
        <dbReference type="ChEBI" id="CHEBI:16526"/>
        <dbReference type="ChEBI" id="CHEBI:28938"/>
    </reaction>
</comment>
<comment type="similarity">
    <text evidence="1">Belongs to the AB hydrolase superfamily. Hydrolase RutD family.</text>
</comment>